<gene>
    <name evidence="8" type="primary">Hsd17b4</name>
    <name type="synonym">Edh17b4</name>
</gene>
<organism>
    <name type="scientific">Rattus norvegicus</name>
    <name type="common">Rat</name>
    <dbReference type="NCBI Taxonomy" id="10116"/>
    <lineage>
        <taxon>Eukaryota</taxon>
        <taxon>Metazoa</taxon>
        <taxon>Chordata</taxon>
        <taxon>Craniata</taxon>
        <taxon>Vertebrata</taxon>
        <taxon>Euteleostomi</taxon>
        <taxon>Mammalia</taxon>
        <taxon>Eutheria</taxon>
        <taxon>Euarchontoglires</taxon>
        <taxon>Glires</taxon>
        <taxon>Rodentia</taxon>
        <taxon>Myomorpha</taxon>
        <taxon>Muroidea</taxon>
        <taxon>Muridae</taxon>
        <taxon>Murinae</taxon>
        <taxon>Rattus</taxon>
    </lineage>
</organism>
<feature type="chain" id="PRO_0000054585" description="Peroxisomal multifunctional enzyme type 2">
    <location>
        <begin position="1"/>
        <end position="735"/>
    </location>
</feature>
<feature type="chain" id="PRO_0000400086" description="(3R)-hydroxyacyl-CoA dehydrogenase">
    <location>
        <begin position="1"/>
        <end position="311"/>
    </location>
</feature>
<feature type="chain" id="PRO_0000400087" description="Enoyl-CoA hydratase 2">
    <location>
        <begin position="312"/>
        <end position="735"/>
    </location>
</feature>
<feature type="domain" description="MaoC-like">
    <location>
        <begin position="483"/>
        <end position="599"/>
    </location>
</feature>
<feature type="domain" description="SCP2">
    <location>
        <begin position="623"/>
        <end position="735"/>
    </location>
</feature>
<feature type="region of interest" description="(3R)-hydroxyacyl-CoA dehydrogenase">
    <location>
        <begin position="1"/>
        <end position="305"/>
    </location>
</feature>
<feature type="region of interest" description="Enoyl-CoA hydratase 2">
    <location>
        <begin position="321"/>
        <end position="621"/>
    </location>
</feature>
<feature type="short sequence motif" description="Microbody targeting signal" evidence="4">
    <location>
        <begin position="733"/>
        <end position="735"/>
    </location>
</feature>
<feature type="active site" description="Proton acceptor">
    <location>
        <position position="164"/>
    </location>
</feature>
<feature type="binding site" evidence="5">
    <location>
        <begin position="16"/>
        <end position="40"/>
    </location>
    <ligand>
        <name>NAD(+)</name>
        <dbReference type="ChEBI" id="CHEBI:57540"/>
    </ligand>
</feature>
<feature type="binding site" evidence="1">
    <location>
        <position position="21"/>
    </location>
    <ligand>
        <name>NAD(+)</name>
        <dbReference type="ChEBI" id="CHEBI:57540"/>
    </ligand>
</feature>
<feature type="binding site" evidence="1">
    <location>
        <position position="40"/>
    </location>
    <ligand>
        <name>NAD(+)</name>
        <dbReference type="ChEBI" id="CHEBI:57540"/>
    </ligand>
</feature>
<feature type="binding site" evidence="1">
    <location>
        <begin position="75"/>
        <end position="76"/>
    </location>
    <ligand>
        <name>NAD(+)</name>
        <dbReference type="ChEBI" id="CHEBI:57540"/>
    </ligand>
</feature>
<feature type="binding site" evidence="1">
    <location>
        <position position="99"/>
    </location>
    <ligand>
        <name>NAD(+)</name>
        <dbReference type="ChEBI" id="CHEBI:57540"/>
    </ligand>
</feature>
<feature type="binding site">
    <location>
        <position position="151"/>
    </location>
    <ligand>
        <name>substrate</name>
    </ligand>
</feature>
<feature type="binding site" evidence="1">
    <location>
        <begin position="164"/>
        <end position="168"/>
    </location>
    <ligand>
        <name>NAD(+)</name>
        <dbReference type="ChEBI" id="CHEBI:57540"/>
    </ligand>
</feature>
<feature type="binding site" evidence="1">
    <location>
        <begin position="196"/>
        <end position="199"/>
    </location>
    <ligand>
        <name>NAD(+)</name>
        <dbReference type="ChEBI" id="CHEBI:57540"/>
    </ligand>
</feature>
<feature type="binding site" evidence="1">
    <location>
        <begin position="405"/>
        <end position="406"/>
    </location>
    <ligand>
        <name>(3R)-3-hydroxydecanoyl-CoA</name>
        <dbReference type="ChEBI" id="CHEBI:74272"/>
    </ligand>
</feature>
<feature type="binding site" evidence="1">
    <location>
        <position position="434"/>
    </location>
    <ligand>
        <name>(3R)-3-hydroxydecanoyl-CoA</name>
        <dbReference type="ChEBI" id="CHEBI:74272"/>
    </ligand>
</feature>
<feature type="binding site" evidence="1">
    <location>
        <begin position="509"/>
        <end position="514"/>
    </location>
    <ligand>
        <name>(3R)-3-hydroxydecanoyl-CoA</name>
        <dbReference type="ChEBI" id="CHEBI:74272"/>
    </ligand>
</feature>
<feature type="binding site" evidence="1">
    <location>
        <position position="532"/>
    </location>
    <ligand>
        <name>(3R)-3-hydroxydecanoyl-CoA</name>
        <dbReference type="ChEBI" id="CHEBI:74272"/>
    </ligand>
</feature>
<feature type="binding site" evidence="1">
    <location>
        <position position="562"/>
    </location>
    <ligand>
        <name>(3R)-3-hydroxydecanoyl-CoA</name>
        <dbReference type="ChEBI" id="CHEBI:74272"/>
    </ligand>
</feature>
<feature type="binding site" evidence="1">
    <location>
        <position position="705"/>
    </location>
    <ligand>
        <name>substrate</name>
    </ligand>
</feature>
<feature type="binding site" evidence="1">
    <location>
        <position position="723"/>
    </location>
    <ligand>
        <name>substrate</name>
    </ligand>
</feature>
<feature type="modified residue" description="N6-acetyllysine; alternate" evidence="3">
    <location>
        <position position="46"/>
    </location>
</feature>
<feature type="modified residue" description="N6-succinyllysine; alternate" evidence="3">
    <location>
        <position position="46"/>
    </location>
</feature>
<feature type="modified residue" description="Phosphoserine" evidence="2">
    <location>
        <position position="52"/>
    </location>
</feature>
<feature type="modified residue" description="N6-succinyllysine" evidence="3">
    <location>
        <position position="57"/>
    </location>
</feature>
<feature type="modified residue" description="N6-succinyllysine" evidence="3">
    <location>
        <position position="68"/>
    </location>
</feature>
<feature type="modified residue" description="N6-succinyllysine" evidence="3">
    <location>
        <position position="84"/>
    </location>
</feature>
<feature type="modified residue" description="Phosphothreonine" evidence="2">
    <location>
        <position position="265"/>
    </location>
</feature>
<feature type="modified residue" description="N6-succinyllysine" evidence="3">
    <location>
        <position position="275"/>
    </location>
</feature>
<feature type="modified residue" description="Phosphoserine" evidence="2">
    <location>
        <position position="304"/>
    </location>
</feature>
<feature type="modified residue" description="Phosphoserine" evidence="2">
    <location>
        <position position="308"/>
    </location>
</feature>
<feature type="modified residue" description="N6-succinyllysine" evidence="3">
    <location>
        <position position="355"/>
    </location>
</feature>
<feature type="modified residue" description="N6-succinyllysine" evidence="3">
    <location>
        <position position="423"/>
    </location>
</feature>
<feature type="modified residue" description="N6-acetyllysine" evidence="2">
    <location>
        <position position="564"/>
    </location>
</feature>
<feature type="modified residue" description="N6-succinyllysine" evidence="3">
    <location>
        <position position="578"/>
    </location>
</feature>
<feature type="modified residue" description="N6-succinyllysine" evidence="3">
    <location>
        <position position="662"/>
    </location>
</feature>
<feature type="modified residue" description="N6-acetyllysine" evidence="2">
    <location>
        <position position="668"/>
    </location>
</feature>
<feature type="modified residue" description="N6-succinyllysine" evidence="3">
    <location>
        <position position="724"/>
    </location>
</feature>
<feature type="sequence conflict" description="In Ref. 1; CAA64427." evidence="7" ref="1">
    <original>MA</original>
    <variation>M</variation>
    <location>
        <begin position="1"/>
        <end position="2"/>
    </location>
</feature>
<feature type="sequence conflict" description="In Ref. 1; CAA64427." evidence="7" ref="1">
    <original>V</original>
    <variation>G</variation>
    <location>
        <position position="12"/>
    </location>
</feature>
<feature type="sequence conflict" description="In Ref. 1; CAA64427." evidence="7" ref="1">
    <original>A</original>
    <variation>G</variation>
    <location>
        <position position="26"/>
    </location>
</feature>
<feature type="sequence conflict" description="In Ref. 4; AAB09724." evidence="7" ref="4">
    <original>V</original>
    <variation>G</variation>
    <location>
        <position position="76"/>
    </location>
</feature>
<feature type="sequence conflict" description="In Ref. 1; CAA64427." evidence="7" ref="1">
    <original>R</original>
    <variation>P</variation>
    <location>
        <position position="106"/>
    </location>
</feature>
<feature type="sequence conflict" description="In Ref. 4; AAB09724." evidence="7" ref="4">
    <original>G</original>
    <variation>S</variation>
    <location>
        <position position="157"/>
    </location>
</feature>
<feature type="sequence conflict" description="In Ref. 1; CAA64427." evidence="7" ref="1">
    <original>K</original>
    <variation>E</variation>
    <location>
        <position position="284"/>
    </location>
</feature>
<feature type="sequence conflict" description="In Ref. 1; CAA64427." evidence="7" ref="1">
    <original>A</original>
    <variation>P</variation>
    <location>
        <position position="368"/>
    </location>
</feature>
<feature type="sequence conflict" description="In Ref. 1; CAA64427." evidence="7" ref="1">
    <original>F</original>
    <variation>I</variation>
    <location>
        <position position="376"/>
    </location>
</feature>
<feature type="sequence conflict" description="In Ref. 4; AAB09724." evidence="7" ref="4">
    <original>M</original>
    <variation>T</variation>
    <location>
        <position position="386"/>
    </location>
</feature>
<feature type="sequence conflict" description="In Ref. 4; AAB09724." evidence="7" ref="4">
    <original>S</original>
    <variation>D</variation>
    <location>
        <position position="485"/>
    </location>
</feature>
<feature type="sequence conflict" description="In Ref. 1; CAA64427." evidence="7" ref="1">
    <original>L</original>
    <variation>V</variation>
    <location>
        <position position="498"/>
    </location>
</feature>
<feature type="sequence conflict" description="In Ref. 1; CAA64427." evidence="7" ref="1">
    <original>S</original>
    <variation>G</variation>
    <location>
        <position position="521"/>
    </location>
</feature>
<feature type="strand" evidence="9">
    <location>
        <begin position="11"/>
        <end position="14"/>
    </location>
</feature>
<feature type="turn" evidence="9">
    <location>
        <begin position="15"/>
        <end position="18"/>
    </location>
</feature>
<feature type="helix" evidence="9">
    <location>
        <begin position="20"/>
        <end position="31"/>
    </location>
</feature>
<feature type="strand" evidence="9">
    <location>
        <begin position="35"/>
        <end position="39"/>
    </location>
</feature>
<feature type="helix" evidence="9">
    <location>
        <begin position="53"/>
        <end position="64"/>
    </location>
</feature>
<feature type="strand" evidence="9">
    <location>
        <begin position="68"/>
        <end position="72"/>
    </location>
</feature>
<feature type="helix" evidence="9">
    <location>
        <begin position="76"/>
        <end position="78"/>
    </location>
</feature>
<feature type="helix" evidence="9">
    <location>
        <begin position="79"/>
        <end position="89"/>
    </location>
</feature>
<feature type="strand" evidence="9">
    <location>
        <begin position="95"/>
        <end position="98"/>
    </location>
</feature>
<feature type="helix" evidence="9">
    <location>
        <begin position="108"/>
        <end position="110"/>
    </location>
</feature>
<feature type="helix" evidence="9">
    <location>
        <begin position="113"/>
        <end position="141"/>
    </location>
</feature>
<feature type="strand" evidence="9">
    <location>
        <begin position="144"/>
        <end position="149"/>
    </location>
</feature>
<feature type="helix" evidence="9">
    <location>
        <begin position="152"/>
        <end position="156"/>
    </location>
</feature>
<feature type="helix" evidence="9">
    <location>
        <begin position="162"/>
        <end position="181"/>
    </location>
</feature>
<feature type="helix" evidence="9">
    <location>
        <begin position="183"/>
        <end position="185"/>
    </location>
</feature>
<feature type="strand" evidence="9">
    <location>
        <begin position="187"/>
        <end position="195"/>
    </location>
</feature>
<feature type="turn" evidence="9">
    <location>
        <begin position="199"/>
        <end position="201"/>
    </location>
</feature>
<feature type="helix" evidence="9">
    <location>
        <begin position="202"/>
        <end position="204"/>
    </location>
</feature>
<feature type="helix" evidence="9">
    <location>
        <begin position="207"/>
        <end position="212"/>
    </location>
</feature>
<feature type="helix" evidence="9">
    <location>
        <begin position="215"/>
        <end position="217"/>
    </location>
</feature>
<feature type="helix" evidence="9">
    <location>
        <begin position="219"/>
        <end position="225"/>
    </location>
</feature>
<feature type="strand" evidence="9">
    <location>
        <begin position="236"/>
        <end position="240"/>
    </location>
</feature>
<feature type="strand" evidence="9">
    <location>
        <begin position="243"/>
        <end position="251"/>
    </location>
</feature>
<feature type="helix" evidence="9">
    <location>
        <begin position="266"/>
        <end position="271"/>
    </location>
</feature>
<feature type="helix" evidence="9">
    <location>
        <begin position="273"/>
        <end position="276"/>
    </location>
</feature>
<feature type="helix" evidence="9">
    <location>
        <begin position="288"/>
        <end position="302"/>
    </location>
</feature>
<keyword id="KW-0002">3D-structure</keyword>
<keyword id="KW-0007">Acetylation</keyword>
<keyword id="KW-0903">Direct protein sequencing</keyword>
<keyword id="KW-0276">Fatty acid metabolism</keyword>
<keyword id="KW-0413">Isomerase</keyword>
<keyword id="KW-0443">Lipid metabolism</keyword>
<keyword id="KW-0456">Lyase</keyword>
<keyword id="KW-0520">NAD</keyword>
<keyword id="KW-0560">Oxidoreductase</keyword>
<keyword id="KW-0576">Peroxisome</keyword>
<keyword id="KW-0597">Phosphoprotein</keyword>
<keyword id="KW-1185">Reference proteome</keyword>
<name>DHB4_RAT</name>
<sequence>MASPLRFDGRVVLVTGAGGGLGRAYALAFAERGALVVVNDLGGDFKGVGKGSSAADKVVEEIRRRGGKAVANYDSVEAGEKLVKTALDTFGRIDVVVNNAGILRDRSFSRISDEDWDIIQRVHLRGSFQVTRAAWDHMKKQNYGRIIMTASASGIYGNFGQANYSAAKLGLLGLANTLVIEGRKNNIHCNTIAPNAGSRMTETVMPEDLVEALKPEYVAPLVLWLCHESCEENGGLFEVGAGWIGKLRWERTLGAIVRKRNQPMTPEAVRDNWVKICDFSNASKPKSIQESTGGIIEVLHKIDSEGISQNHTGQVASADASGFAGVVGHKLPSFSSSYTELQCIMYALGVGASVKNPKDLKFVYEGSADFSCLPTFGVIVAQKSLMSGGLAEVPGLSINFAKVLHGEQYLELYKPLPRSGELKCEAVIADILDKGSGIVIVMDVYSYSGKELICYNQFSVFVVGSGGFGGKRTSEKLKAAVAVPSRPPDAVLRDTTSLNQAALYRLSGDSNPLHIDPSFASIAGFEKPILHGLCTFGFSARHVLQQFADNDVSRFKAIKVRFAKPVYPGQTLQTEMWKEGNRIHFQTKVQETGDIVISNAYVDLVPTSGVSAQTPSEGGALQSALVFGEIGRRLKDVGREVVKKVNAVFEWHITKNGNVAAKWTIDLKNGSGEVYQGPAKGSADTTITISDEDFMEVVLGKLNPQNAFFSGRLKARGNIMLSQKLQMILKDYAKL</sequence>
<evidence type="ECO:0000250" key="1"/>
<evidence type="ECO:0000250" key="2">
    <source>
        <dbReference type="UniProtKB" id="P51659"/>
    </source>
</evidence>
<evidence type="ECO:0000250" key="3">
    <source>
        <dbReference type="UniProtKB" id="P51660"/>
    </source>
</evidence>
<evidence type="ECO:0000255" key="4"/>
<evidence type="ECO:0000269" key="5">
    <source>
    </source>
</evidence>
<evidence type="ECO:0000269" key="6">
    <source>
    </source>
</evidence>
<evidence type="ECO:0000305" key="7"/>
<evidence type="ECO:0000312" key="8">
    <source>
        <dbReference type="RGD" id="621806"/>
    </source>
</evidence>
<evidence type="ECO:0007829" key="9">
    <source>
        <dbReference type="PDB" id="1GZ6"/>
    </source>
</evidence>
<proteinExistence type="evidence at protein level"/>
<dbReference type="EC" id="1.1.1.n12" evidence="2"/>
<dbReference type="EC" id="4.2.1.107" evidence="2"/>
<dbReference type="EC" id="4.2.1.119" evidence="2"/>
<dbReference type="EMBL" id="S83279">
    <property type="protein sequence ID" value="AAB49519.1"/>
    <property type="molecule type" value="mRNA"/>
</dbReference>
<dbReference type="EMBL" id="U37486">
    <property type="protein sequence ID" value="AAB09724.1"/>
    <property type="molecule type" value="mRNA"/>
</dbReference>
<dbReference type="EMBL" id="X94978">
    <property type="protein sequence ID" value="CAA64427.1"/>
    <property type="molecule type" value="mRNA"/>
</dbReference>
<dbReference type="RefSeq" id="NP_077368.2">
    <property type="nucleotide sequence ID" value="NM_024392.2"/>
</dbReference>
<dbReference type="PDB" id="1GZ6">
    <property type="method" value="X-ray"/>
    <property type="resolution" value="2.38 A"/>
    <property type="chains" value="A/B/C/D=1-319"/>
</dbReference>
<dbReference type="PDBsum" id="1GZ6"/>
<dbReference type="SMR" id="P97852"/>
<dbReference type="BioGRID" id="249442">
    <property type="interactions" value="2"/>
</dbReference>
<dbReference type="FunCoup" id="P97852">
    <property type="interactions" value="1335"/>
</dbReference>
<dbReference type="IntAct" id="P97852">
    <property type="interactions" value="2"/>
</dbReference>
<dbReference type="STRING" id="10116.ENSRNOP00000070792"/>
<dbReference type="ChEMBL" id="CHEMBL1075219"/>
<dbReference type="iPTMnet" id="P97852"/>
<dbReference type="PhosphoSitePlus" id="P97852"/>
<dbReference type="jPOST" id="P97852"/>
<dbReference type="PaxDb" id="10116-ENSRNOP00000021646"/>
<dbReference type="GeneID" id="79244"/>
<dbReference type="KEGG" id="rno:79244"/>
<dbReference type="UCSC" id="RGD:621806">
    <property type="organism name" value="rat"/>
</dbReference>
<dbReference type="AGR" id="RGD:621806"/>
<dbReference type="CTD" id="3295"/>
<dbReference type="RGD" id="621806">
    <property type="gene designation" value="Hsd17b4"/>
</dbReference>
<dbReference type="VEuPathDB" id="HostDB:ENSRNOG00000015840"/>
<dbReference type="eggNOG" id="ENOG502QPX4">
    <property type="taxonomic scope" value="Eukaryota"/>
</dbReference>
<dbReference type="HOGENOM" id="CLU_010194_18_4_1"/>
<dbReference type="InParanoid" id="P97852"/>
<dbReference type="OrthoDB" id="3592703at2759"/>
<dbReference type="BioCyc" id="MetaCyc:MONOMER-14329"/>
<dbReference type="Reactome" id="R-RNO-193368">
    <property type="pathway name" value="Synthesis of bile acids and bile salts via 7alpha-hydroxycholesterol"/>
</dbReference>
<dbReference type="Reactome" id="R-RNO-2046106">
    <property type="pathway name" value="alpha-linolenic acid (ALA) metabolism"/>
</dbReference>
<dbReference type="Reactome" id="R-RNO-389887">
    <property type="pathway name" value="Beta-oxidation of pristanoyl-CoA"/>
</dbReference>
<dbReference type="Reactome" id="R-RNO-390247">
    <property type="pathway name" value="Beta-oxidation of very long chain fatty acids"/>
</dbReference>
<dbReference type="Reactome" id="R-RNO-9033241">
    <property type="pathway name" value="Peroxisomal protein import"/>
</dbReference>
<dbReference type="UniPathway" id="UPA00659"/>
<dbReference type="EvolutionaryTrace" id="P97852"/>
<dbReference type="PRO" id="PR:P97852"/>
<dbReference type="Proteomes" id="UP000002494">
    <property type="component" value="Chromosome 18"/>
</dbReference>
<dbReference type="Bgee" id="ENSRNOG00000015840">
    <property type="expression patterns" value="Expressed in liver and 19 other cell types or tissues"/>
</dbReference>
<dbReference type="ExpressionAtlas" id="P97852">
    <property type="expression patterns" value="baseline and differential"/>
</dbReference>
<dbReference type="GO" id="GO:0005777">
    <property type="term" value="C:peroxisome"/>
    <property type="evidence" value="ECO:0000314"/>
    <property type="project" value="HGNC-UCL"/>
</dbReference>
<dbReference type="GO" id="GO:0106386">
    <property type="term" value="F:(3R)-hydroxyacyl-CoA dehydrogenase (NAD+) activity"/>
    <property type="evidence" value="ECO:0007669"/>
    <property type="project" value="RHEA"/>
</dbReference>
<dbReference type="GO" id="GO:0044594">
    <property type="term" value="F:17-beta-hydroxysteroid dehydrogenase (NAD+) activity"/>
    <property type="evidence" value="ECO:0000314"/>
    <property type="project" value="RGD"/>
</dbReference>
<dbReference type="GO" id="GO:0018812">
    <property type="term" value="F:3-hydroxyacyl-CoA dehydratase activity"/>
    <property type="evidence" value="ECO:0000314"/>
    <property type="project" value="RGD"/>
</dbReference>
<dbReference type="GO" id="GO:0003857">
    <property type="term" value="F:3-hydroxyacyl-CoA dehydrogenase activity"/>
    <property type="evidence" value="ECO:0000250"/>
    <property type="project" value="UniProtKB"/>
</dbReference>
<dbReference type="GO" id="GO:0033989">
    <property type="term" value="F:3alpha,7alpha,12alpha-trihydroxy-5beta-cholest-24-enoyl-CoA hydratase activity"/>
    <property type="evidence" value="ECO:0007669"/>
    <property type="project" value="UniProtKB-EC"/>
</dbReference>
<dbReference type="GO" id="GO:0004300">
    <property type="term" value="F:enoyl-CoA hydratase activity"/>
    <property type="evidence" value="ECO:0000250"/>
    <property type="project" value="UniProtKB"/>
</dbReference>
<dbReference type="GO" id="GO:0004303">
    <property type="term" value="F:estradiol 17-beta-dehydrogenase [NAD(P)+] activity"/>
    <property type="evidence" value="ECO:0000314"/>
    <property type="project" value="RGD"/>
</dbReference>
<dbReference type="GO" id="GO:0042802">
    <property type="term" value="F:identical protein binding"/>
    <property type="evidence" value="ECO:0000353"/>
    <property type="project" value="RGD"/>
</dbReference>
<dbReference type="GO" id="GO:0016853">
    <property type="term" value="F:isomerase activity"/>
    <property type="evidence" value="ECO:0007669"/>
    <property type="project" value="UniProtKB-KW"/>
</dbReference>
<dbReference type="GO" id="GO:0042803">
    <property type="term" value="F:protein homodimerization activity"/>
    <property type="evidence" value="ECO:0000266"/>
    <property type="project" value="RGD"/>
</dbReference>
<dbReference type="GO" id="GO:0030283">
    <property type="term" value="F:testosterone dehydrogenase [NAD(P)+] activity"/>
    <property type="evidence" value="ECO:0000304"/>
    <property type="project" value="RGD"/>
</dbReference>
<dbReference type="GO" id="GO:0008209">
    <property type="term" value="P:androgen metabolic process"/>
    <property type="evidence" value="ECO:0000266"/>
    <property type="project" value="RGD"/>
</dbReference>
<dbReference type="GO" id="GO:0008203">
    <property type="term" value="P:cholesterol metabolic process"/>
    <property type="evidence" value="ECO:0000303"/>
    <property type="project" value="RGD"/>
</dbReference>
<dbReference type="GO" id="GO:0008210">
    <property type="term" value="P:estrogen metabolic process"/>
    <property type="evidence" value="ECO:0000266"/>
    <property type="project" value="RGD"/>
</dbReference>
<dbReference type="GO" id="GO:0006635">
    <property type="term" value="P:fatty acid beta-oxidation"/>
    <property type="evidence" value="ECO:0000250"/>
    <property type="project" value="UniProtKB"/>
</dbReference>
<dbReference type="GO" id="GO:0036112">
    <property type="term" value="P:medium-chain fatty-acyl-CoA metabolic process"/>
    <property type="evidence" value="ECO:0000266"/>
    <property type="project" value="RGD"/>
</dbReference>
<dbReference type="GO" id="GO:0048545">
    <property type="term" value="P:response to steroid hormone"/>
    <property type="evidence" value="ECO:0000270"/>
    <property type="project" value="RGD"/>
</dbReference>
<dbReference type="GO" id="GO:0009410">
    <property type="term" value="P:response to xenobiotic stimulus"/>
    <property type="evidence" value="ECO:0000270"/>
    <property type="project" value="RGD"/>
</dbReference>
<dbReference type="GO" id="GO:0060009">
    <property type="term" value="P:Sertoli cell development"/>
    <property type="evidence" value="ECO:0000266"/>
    <property type="project" value="RGD"/>
</dbReference>
<dbReference type="GO" id="GO:0000038">
    <property type="term" value="P:very long-chain fatty acid metabolic process"/>
    <property type="evidence" value="ECO:0000266"/>
    <property type="project" value="RGD"/>
</dbReference>
<dbReference type="GO" id="GO:0036111">
    <property type="term" value="P:very long-chain fatty-acyl-CoA metabolic process"/>
    <property type="evidence" value="ECO:0000266"/>
    <property type="project" value="RGD"/>
</dbReference>
<dbReference type="CDD" id="cd03448">
    <property type="entry name" value="HDE_HSD"/>
    <property type="match status" value="1"/>
</dbReference>
<dbReference type="CDD" id="cd05353">
    <property type="entry name" value="hydroxyacyl-CoA-like_DH_SDR_c-like"/>
    <property type="match status" value="1"/>
</dbReference>
<dbReference type="FunFam" id="3.30.1050.10:FF:000004">
    <property type="entry name" value="Hydroxysteroid 17-beta dehydrogenase 4"/>
    <property type="match status" value="1"/>
</dbReference>
<dbReference type="FunFam" id="1.10.287.4290:FF:000001">
    <property type="entry name" value="Peroxisomal multifunctional enzyme type 2"/>
    <property type="match status" value="1"/>
</dbReference>
<dbReference type="FunFam" id="3.10.129.10:FF:000013">
    <property type="entry name" value="Peroxisomal multifunctional enzyme type 2"/>
    <property type="match status" value="1"/>
</dbReference>
<dbReference type="FunFam" id="3.10.129.10:FF:000019">
    <property type="entry name" value="peroxisomal multifunctional enzyme type 2"/>
    <property type="match status" value="1"/>
</dbReference>
<dbReference type="FunFam" id="3.40.50.720:FF:000185">
    <property type="entry name" value="peroxisomal multifunctional enzyme type 2"/>
    <property type="match status" value="1"/>
</dbReference>
<dbReference type="Gene3D" id="1.10.287.4290">
    <property type="match status" value="1"/>
</dbReference>
<dbReference type="Gene3D" id="3.10.129.10">
    <property type="entry name" value="Hotdog Thioesterase"/>
    <property type="match status" value="2"/>
</dbReference>
<dbReference type="Gene3D" id="3.40.50.720">
    <property type="entry name" value="NAD(P)-binding Rossmann-like Domain"/>
    <property type="match status" value="1"/>
</dbReference>
<dbReference type="Gene3D" id="3.30.1050.10">
    <property type="entry name" value="SCP2 sterol-binding domain"/>
    <property type="match status" value="1"/>
</dbReference>
<dbReference type="InterPro" id="IPR029069">
    <property type="entry name" value="HotDog_dom_sf"/>
</dbReference>
<dbReference type="InterPro" id="IPR002539">
    <property type="entry name" value="MaoC-like_dom"/>
</dbReference>
<dbReference type="InterPro" id="IPR054357">
    <property type="entry name" value="MFE-2_N"/>
</dbReference>
<dbReference type="InterPro" id="IPR036291">
    <property type="entry name" value="NAD(P)-bd_dom_sf"/>
</dbReference>
<dbReference type="InterPro" id="IPR051687">
    <property type="entry name" value="Peroxisomal_Beta-Oxidation"/>
</dbReference>
<dbReference type="InterPro" id="IPR003033">
    <property type="entry name" value="SCP2_sterol-bd_dom"/>
</dbReference>
<dbReference type="InterPro" id="IPR036527">
    <property type="entry name" value="SCP2_sterol-bd_dom_sf"/>
</dbReference>
<dbReference type="InterPro" id="IPR002347">
    <property type="entry name" value="SDR_fam"/>
</dbReference>
<dbReference type="PANTHER" id="PTHR45024">
    <property type="entry name" value="DEHYDROGENASES, SHORT CHAIN"/>
    <property type="match status" value="1"/>
</dbReference>
<dbReference type="PANTHER" id="PTHR45024:SF2">
    <property type="entry name" value="SCP2 DOMAIN-CONTAINING PROTEIN"/>
    <property type="match status" value="1"/>
</dbReference>
<dbReference type="Pfam" id="PF00106">
    <property type="entry name" value="adh_short"/>
    <property type="match status" value="1"/>
</dbReference>
<dbReference type="Pfam" id="PF01575">
    <property type="entry name" value="MaoC_dehydratas"/>
    <property type="match status" value="1"/>
</dbReference>
<dbReference type="Pfam" id="PF22622">
    <property type="entry name" value="MFE-2_hydrat-2_N"/>
    <property type="match status" value="1"/>
</dbReference>
<dbReference type="Pfam" id="PF02036">
    <property type="entry name" value="SCP2"/>
    <property type="match status" value="1"/>
</dbReference>
<dbReference type="PRINTS" id="PR00081">
    <property type="entry name" value="GDHRDH"/>
</dbReference>
<dbReference type="PRINTS" id="PR00080">
    <property type="entry name" value="SDRFAMILY"/>
</dbReference>
<dbReference type="SMART" id="SM00822">
    <property type="entry name" value="PKS_KR"/>
    <property type="match status" value="1"/>
</dbReference>
<dbReference type="SUPFAM" id="SSF51735">
    <property type="entry name" value="NAD(P)-binding Rossmann-fold domains"/>
    <property type="match status" value="1"/>
</dbReference>
<dbReference type="SUPFAM" id="SSF55718">
    <property type="entry name" value="SCP-like"/>
    <property type="match status" value="1"/>
</dbReference>
<dbReference type="SUPFAM" id="SSF54637">
    <property type="entry name" value="Thioesterase/thiol ester dehydrase-isomerase"/>
    <property type="match status" value="2"/>
</dbReference>
<protein>
    <recommendedName>
        <fullName evidence="7">Peroxisomal multifunctional enzyme type 2</fullName>
        <shortName>MFE-2</shortName>
    </recommendedName>
    <alternativeName>
        <fullName>17-beta-hydroxysteroid dehydrogenase 4</fullName>
        <shortName>17-beta-HSD 4</shortName>
    </alternativeName>
    <alternativeName>
        <fullName>D-bifunctional protein</fullName>
        <shortName>DBP</shortName>
    </alternativeName>
    <alternativeName>
        <fullName>Multifunctional protein 2</fullName>
        <shortName>MFP-2</shortName>
    </alternativeName>
    <component>
        <recommendedName>
            <fullName>(3R)-hydroxyacyl-CoA dehydrogenase</fullName>
            <ecNumber evidence="2">1.1.1.n12</ecNumber>
        </recommendedName>
    </component>
    <component>
        <recommendedName>
            <fullName>Enoyl-CoA hydratase 2</fullName>
            <ecNumber evidence="2">4.2.1.107</ecNumber>
            <ecNumber evidence="2">4.2.1.119</ecNumber>
        </recommendedName>
        <alternativeName>
            <fullName>3-alpha,7-alpha,12-alpha-trihydroxy-5-beta-cholest-24-enoyl-CoA hydratase</fullName>
        </alternativeName>
    </component>
</protein>
<reference key="1">
    <citation type="journal article" date="1996" name="Eur. J. Biochem.">
        <title>Further characterization of the peroxisomal 3-hydroxyacyl-CoA dehydrogenases from rat liver. Relationship between the different dehydrogenases and evidence that fatty acids and the C27 bile acids di- and tri-hydroxycoprostanic acids are metabolized by separate multifunctional proteins.</title>
        <authorList>
            <person name="Dieuaide-Noubhani M."/>
            <person name="Novikov D."/>
            <person name="Baumgart E."/>
            <person name="Vanhooren J.C.T."/>
            <person name="Fransen M."/>
            <person name="Goethals M."/>
            <person name="Vandekerckhove J."/>
            <person name="Van Veldhoven P.P."/>
            <person name="Mannaerts G.P."/>
        </authorList>
    </citation>
    <scope>NUCLEOTIDE SEQUENCE [MRNA]</scope>
    <scope>PROTEIN SEQUENCE OF 26-30; 32-44; 110-115; 132-139 AND 270-274</scope>
    <scope>SUBCELLULAR LOCATION</scope>
    <scope>PROTEOLYTIC CLEAVAGE</scope>
    <source>
        <tissue>Liver</tissue>
    </source>
</reference>
<reference key="2">
    <citation type="journal article" date="1997" name="Eur. J. Biochem.">
        <authorList>
            <person name="Dieuaide-Noubhani M."/>
            <person name="Novikov D."/>
            <person name="Baumgart E."/>
            <person name="Vanhooren J.C.T."/>
            <person name="Fransen M."/>
            <person name="Goethals M."/>
            <person name="Vandekerckhove J."/>
            <person name="Van Veldhoven P.P."/>
            <person name="Mannaerts G.P."/>
        </authorList>
    </citation>
    <scope>ERRATUM OF PUBMED:8856068</scope>
</reference>
<reference key="3">
    <citation type="journal article" date="1996" name="Mol. Pharmacol.">
        <title>Rat 17 beta-hydroxysteroid dehydrogenase type IV is a novel peroxisome proliferator-inducible gene.</title>
        <authorList>
            <person name="Corton J.C."/>
            <person name="Bocos C."/>
            <person name="Moreno E.S."/>
            <person name="Merritt A."/>
            <person name="Marsman D.S."/>
            <person name="Sausen P.J."/>
            <person name="Cattley R.C."/>
            <person name="Gustafsson J.-A."/>
        </authorList>
    </citation>
    <scope>NUCLEOTIDE SEQUENCE [MRNA]</scope>
    <source>
        <tissue>Liver</tissue>
    </source>
</reference>
<reference key="4">
    <citation type="journal article" date="1997" name="Biochem. J.">
        <title>Peroxisomal multifunctional enzyme of beta-oxidation metabolizing D-3-hydroxyacyl-CoA esters in rat liver: molecular cloning, expression and characterization.</title>
        <authorList>
            <person name="Qin Y.M."/>
            <person name="Poutanen M.H."/>
            <person name="Helander H.M."/>
            <person name="Kvist A.P."/>
            <person name="Siivari K.M."/>
            <person name="Schmitz W."/>
            <person name="Conzelmann E."/>
            <person name="Hellman U."/>
            <person name="Hiltunen J.K."/>
        </authorList>
    </citation>
    <scope>NUCLEOTIDE SEQUENCE [MRNA]</scope>
    <scope>PROTEIN SEQUENCE OF 318-330; 479-505; 542-554; 562-576 AND 583-587</scope>
    <scope>ENZYME CATALYSIS</scope>
</reference>
<reference key="5">
    <citation type="journal article" date="1997" name="Biochem. J.">
        <title>Identification and characterization of the 2-enoyl-CoA hydratases involved in peroxisomal beta-oxidation in rat liver.</title>
        <authorList>
            <person name="Dieuaide-Noubhani M."/>
            <person name="Novikov D."/>
            <person name="Vandekerckhove J."/>
            <person name="Veldhoven P.P."/>
            <person name="Mannaerts G.P."/>
        </authorList>
    </citation>
    <scope>PROTEIN SEQUENCE OF 312-324</scope>
    <scope>PROTEOLYTIC CLEAVAGE</scope>
</reference>
<reference key="6">
    <citation type="journal article" date="2003" name="Structure">
        <title>Binary structure of the two-domain (3R)-hydroxyacyl-CoA dehydrogenase from rat peroxisomal multifunctional enzyme type 2 at 2.38 A resolution.</title>
        <authorList>
            <person name="Haapalainen A.M."/>
            <person name="Koski M.K."/>
            <person name="Qin Y.-M."/>
            <person name="Hiltunen J.K."/>
            <person name="Glumoff T."/>
        </authorList>
    </citation>
    <scope>X-RAY CRYSTALLOGRAPHY (2.38 ANGSTROMS) OF 1-319 IN COMPLEX WITH NAD</scope>
    <scope>HOMODIMERIZATION</scope>
</reference>
<accession>P97852</accession>
<accession>P70523</accession>
<accession>P70540</accession>
<comment type="function">
    <text evidence="2">Bifunctional enzyme acting on the peroxisomal fatty acid beta-oxidation pathway. Catalyzes two of the four reactions in fatty acid degradation: hydration of 2-enoyl-CoA (trans-2-enoyl-CoA) to produce (3R)-3-hydroxyacyl-CoA, and dehydrogenation of (3R)-3-hydroxyacyl-CoA to produce 3-ketoacyl-CoA (3-oxoacyl-CoA), which is further metabolized by SCPx. Can use straight-chain and branched-chain fatty acids, as well as bile acid intermediates as substrates.</text>
</comment>
<comment type="catalytic activity">
    <reaction evidence="2">
        <text>a (3R)-3-hydroxyacyl-CoA + NAD(+) = a 3-oxoacyl-CoA + NADH + H(+)</text>
        <dbReference type="Rhea" id="RHEA:32711"/>
        <dbReference type="ChEBI" id="CHEBI:15378"/>
        <dbReference type="ChEBI" id="CHEBI:57319"/>
        <dbReference type="ChEBI" id="CHEBI:57540"/>
        <dbReference type="ChEBI" id="CHEBI:57945"/>
        <dbReference type="ChEBI" id="CHEBI:90726"/>
        <dbReference type="EC" id="1.1.1.n12"/>
    </reaction>
    <physiologicalReaction direction="left-to-right" evidence="2">
        <dbReference type="Rhea" id="RHEA:32712"/>
    </physiologicalReaction>
</comment>
<comment type="catalytic activity">
    <reaction evidence="2">
        <text>(24R,25R)-3alpha,7alpha,12alpha,24-tetrahydroxy-5beta-cholestan-26-oyl-CoA = (24E)-3alpha,7alpha,12alpha-trihydroxy-5beta-cholest-24-en-26-oyl-CoA + H2O</text>
        <dbReference type="Rhea" id="RHEA:18933"/>
        <dbReference type="ChEBI" id="CHEBI:15377"/>
        <dbReference type="ChEBI" id="CHEBI:59807"/>
        <dbReference type="ChEBI" id="CHEBI:59879"/>
        <dbReference type="EC" id="4.2.1.107"/>
    </reaction>
    <physiologicalReaction direction="right-to-left" evidence="2">
        <dbReference type="Rhea" id="RHEA:18935"/>
    </physiologicalReaction>
</comment>
<comment type="catalytic activity">
    <reaction evidence="2">
        <text>a (3R)-3-hydroxyacyl-CoA = a (2E)-enoyl-CoA + H2O</text>
        <dbReference type="Rhea" id="RHEA:26526"/>
        <dbReference type="ChEBI" id="CHEBI:15377"/>
        <dbReference type="ChEBI" id="CHEBI:57319"/>
        <dbReference type="ChEBI" id="CHEBI:58856"/>
        <dbReference type="EC" id="4.2.1.119"/>
    </reaction>
    <physiologicalReaction direction="right-to-left" evidence="2">
        <dbReference type="Rhea" id="RHEA:26528"/>
    </physiologicalReaction>
</comment>
<comment type="catalytic activity">
    <reaction evidence="2">
        <text>(2E)-octenoyl-CoA + H2O = (3R)-hydroxyoctanoyl-CoA</text>
        <dbReference type="Rhea" id="RHEA:40187"/>
        <dbReference type="ChEBI" id="CHEBI:15377"/>
        <dbReference type="ChEBI" id="CHEBI:62242"/>
        <dbReference type="ChEBI" id="CHEBI:74279"/>
    </reaction>
    <physiologicalReaction direction="left-to-right" evidence="2">
        <dbReference type="Rhea" id="RHEA:40188"/>
    </physiologicalReaction>
</comment>
<comment type="catalytic activity">
    <reaction evidence="2">
        <text>(3R)-hydroxyoctanoyl-CoA + NAD(+) = 3-oxooctanoyl-CoA + NADH + H(+)</text>
        <dbReference type="Rhea" id="RHEA:40191"/>
        <dbReference type="ChEBI" id="CHEBI:15378"/>
        <dbReference type="ChEBI" id="CHEBI:57540"/>
        <dbReference type="ChEBI" id="CHEBI:57945"/>
        <dbReference type="ChEBI" id="CHEBI:62619"/>
        <dbReference type="ChEBI" id="CHEBI:74279"/>
    </reaction>
    <physiologicalReaction direction="left-to-right" evidence="2">
        <dbReference type="Rhea" id="RHEA:40192"/>
    </physiologicalReaction>
</comment>
<comment type="catalytic activity">
    <reaction evidence="2">
        <text>(3R)-hydroxyhexadecanoyl-CoA + NAD(+) = 3-oxohexadecanoyl-CoA + NADH + H(+)</text>
        <dbReference type="Rhea" id="RHEA:40243"/>
        <dbReference type="ChEBI" id="CHEBI:15378"/>
        <dbReference type="ChEBI" id="CHEBI:57349"/>
        <dbReference type="ChEBI" id="CHEBI:57540"/>
        <dbReference type="ChEBI" id="CHEBI:57945"/>
        <dbReference type="ChEBI" id="CHEBI:74278"/>
    </reaction>
    <physiologicalReaction direction="left-to-right" evidence="2">
        <dbReference type="Rhea" id="RHEA:40244"/>
    </physiologicalReaction>
</comment>
<comment type="catalytic activity">
    <reaction evidence="2">
        <text>(2E)-hexadecenedioyl-CoA + H2O = (3R)-hydroxyhexadecanedioyl-CoA</text>
        <dbReference type="Rhea" id="RHEA:40255"/>
        <dbReference type="ChEBI" id="CHEBI:15377"/>
        <dbReference type="ChEBI" id="CHEBI:77075"/>
        <dbReference type="ChEBI" id="CHEBI:77079"/>
    </reaction>
    <physiologicalReaction direction="left-to-right" evidence="2">
        <dbReference type="Rhea" id="RHEA:40256"/>
    </physiologicalReaction>
</comment>
<comment type="catalytic activity">
    <reaction evidence="2">
        <text>(3R)-hydroxyhexadecanedioyl-CoA + NAD(+) = 3-oxohexadecanedioyl-CoA + NADH + H(+)</text>
        <dbReference type="Rhea" id="RHEA:40263"/>
        <dbReference type="ChEBI" id="CHEBI:15378"/>
        <dbReference type="ChEBI" id="CHEBI:57540"/>
        <dbReference type="ChEBI" id="CHEBI:57945"/>
        <dbReference type="ChEBI" id="CHEBI:77079"/>
        <dbReference type="ChEBI" id="CHEBI:77081"/>
    </reaction>
    <physiologicalReaction direction="left-to-right" evidence="2">
        <dbReference type="Rhea" id="RHEA:40264"/>
    </physiologicalReaction>
</comment>
<comment type="catalytic activity">
    <reaction evidence="2">
        <text>(3R)-hydroxyhexadecanoyl-CoA = (2E)-hexadecenoyl-CoA + H2O</text>
        <dbReference type="Rhea" id="RHEA:39159"/>
        <dbReference type="ChEBI" id="CHEBI:15377"/>
        <dbReference type="ChEBI" id="CHEBI:61526"/>
        <dbReference type="ChEBI" id="CHEBI:74278"/>
    </reaction>
    <physiologicalReaction direction="right-to-left" evidence="2">
        <dbReference type="Rhea" id="RHEA:39161"/>
    </physiologicalReaction>
</comment>
<comment type="catalytic activity">
    <reaction evidence="2">
        <text>(3R)-3-hydroxydecanoyl-CoA = (2E)-decenoyl-CoA + H2O</text>
        <dbReference type="Rhea" id="RHEA:45992"/>
        <dbReference type="ChEBI" id="CHEBI:15377"/>
        <dbReference type="ChEBI" id="CHEBI:61406"/>
        <dbReference type="ChEBI" id="CHEBI:74272"/>
    </reaction>
    <physiologicalReaction direction="right-to-left" evidence="2">
        <dbReference type="Rhea" id="RHEA:45994"/>
    </physiologicalReaction>
</comment>
<comment type="catalytic activity">
    <reaction evidence="2">
        <text>(3R)-3-hydroxydecanoyl-CoA + NAD(+) = 3-oxodecanoyl-CoA + NADH + H(+)</text>
        <dbReference type="Rhea" id="RHEA:45832"/>
        <dbReference type="ChEBI" id="CHEBI:15378"/>
        <dbReference type="ChEBI" id="CHEBI:57540"/>
        <dbReference type="ChEBI" id="CHEBI:57945"/>
        <dbReference type="ChEBI" id="CHEBI:62548"/>
        <dbReference type="ChEBI" id="CHEBI:74272"/>
    </reaction>
    <physiologicalReaction direction="left-to-right" evidence="2">
        <dbReference type="Rhea" id="RHEA:45833"/>
    </physiologicalReaction>
</comment>
<comment type="catalytic activity">
    <reaction evidence="2">
        <text>(24R,25R)-3alpha,7alpha,12alpha,24-tetrahydroxy-5beta-cholestan-26-oyl-CoA + NAD(+) = 3alpha,7alpha,12alpha-trihydroxy-24-oxo-5beta-cholestan-26-oyl-CoA + NADH + H(+)</text>
        <dbReference type="Rhea" id="RHEA:47088"/>
        <dbReference type="ChEBI" id="CHEBI:15378"/>
        <dbReference type="ChEBI" id="CHEBI:57540"/>
        <dbReference type="ChEBI" id="CHEBI:57945"/>
        <dbReference type="ChEBI" id="CHEBI:58507"/>
        <dbReference type="ChEBI" id="CHEBI:59807"/>
    </reaction>
    <physiologicalReaction direction="left-to-right" evidence="2">
        <dbReference type="Rhea" id="RHEA:47089"/>
    </physiologicalReaction>
</comment>
<comment type="pathway">
    <text evidence="2">Lipid metabolism; fatty acid beta-oxidation.</text>
</comment>
<comment type="subunit">
    <text evidence="5">Homodimer.</text>
</comment>
<comment type="subcellular location">
    <subcellularLocation>
        <location evidence="6">Peroxisome</location>
    </subcellularLocation>
</comment>
<comment type="miscellaneous">
    <text>The protein is found both as a full-length peptide and in a cleaved version.</text>
</comment>
<comment type="similarity">
    <text evidence="7">Belongs to the short-chain dehydrogenases/reductases (SDR) family.</text>
</comment>